<organism>
    <name type="scientific">Acaryochloris marina (strain MBIC 11017)</name>
    <dbReference type="NCBI Taxonomy" id="329726"/>
    <lineage>
        <taxon>Bacteria</taxon>
        <taxon>Bacillati</taxon>
        <taxon>Cyanobacteriota</taxon>
        <taxon>Cyanophyceae</taxon>
        <taxon>Acaryochloridales</taxon>
        <taxon>Acaryochloridaceae</taxon>
        <taxon>Acaryochloris</taxon>
    </lineage>
</organism>
<sequence>MLTDTLNTTKSEEIFAAAQKLMPGGVSSPVRAFKSVGGQPIVFDRVKGAHVWDVDGNQYIDYVGTWGPAICGHAHPEVLTALKEALDKGTSFGAPCLLENVLAEMVIDAVPSVEVVRFVNSGTEACMSVLRLMRAFTGREKVIKFEGCYHGHADMFLVKAGSGVATLGLPDSPGVPKSVTGNTLTAPYNDLQSVQALFSQHPDQIAGVILEPVVGNAGFIPPDAGFLEGLREITKENGALLVFDEVMTGFRISYGGAQEKFGITPDLTTLGKVIGGGLPVGAYGGRRDIMSMVAPAGPMYQAGTLSGNPLAMTAGIKTLELLRRSGTYDQLDRVTGKLISGLLQIAREAGHEVCGGHINGMFGMFFAPGPVHSYDDAKAADAAKFAKFHRGMLEQGVYLAPSQFEAGFTSLAHTDADIDQTLEAAKVVLANI</sequence>
<feature type="chain" id="PRO_1000079914" description="Glutamate-1-semialdehyde 2,1-aminomutase">
    <location>
        <begin position="1"/>
        <end position="432"/>
    </location>
</feature>
<feature type="modified residue" description="N6-(pyridoxal phosphate)lysine" evidence="1">
    <location>
        <position position="272"/>
    </location>
</feature>
<name>GSA_ACAM1</name>
<proteinExistence type="inferred from homology"/>
<comment type="catalytic activity">
    <reaction evidence="1">
        <text>(S)-4-amino-5-oxopentanoate = 5-aminolevulinate</text>
        <dbReference type="Rhea" id="RHEA:14265"/>
        <dbReference type="ChEBI" id="CHEBI:57501"/>
        <dbReference type="ChEBI" id="CHEBI:356416"/>
        <dbReference type="EC" id="5.4.3.8"/>
    </reaction>
</comment>
<comment type="cofactor">
    <cofactor evidence="1">
        <name>pyridoxal 5'-phosphate</name>
        <dbReference type="ChEBI" id="CHEBI:597326"/>
    </cofactor>
</comment>
<comment type="pathway">
    <text evidence="1">Porphyrin-containing compound metabolism; protoporphyrin-IX biosynthesis; 5-aminolevulinate from L-glutamyl-tRNA(Glu): step 2/2.</text>
</comment>
<comment type="pathway">
    <text evidence="1">Porphyrin-containing compound metabolism; chlorophyll biosynthesis.</text>
</comment>
<comment type="subunit">
    <text evidence="1">Homodimer.</text>
</comment>
<comment type="subcellular location">
    <subcellularLocation>
        <location evidence="1">Cytoplasm</location>
    </subcellularLocation>
</comment>
<comment type="similarity">
    <text evidence="1">Belongs to the class-III pyridoxal-phosphate-dependent aminotransferase family. HemL subfamily.</text>
</comment>
<gene>
    <name evidence="1" type="primary">hemL</name>
    <name type="ordered locus">AM1_0549</name>
</gene>
<evidence type="ECO:0000255" key="1">
    <source>
        <dbReference type="HAMAP-Rule" id="MF_00375"/>
    </source>
</evidence>
<accession>B0CC57</accession>
<dbReference type="EC" id="5.4.3.8" evidence="1"/>
<dbReference type="EMBL" id="CP000828">
    <property type="protein sequence ID" value="ABW25599.1"/>
    <property type="molecule type" value="Genomic_DNA"/>
</dbReference>
<dbReference type="RefSeq" id="WP_012161200.1">
    <property type="nucleotide sequence ID" value="NC_009925.1"/>
</dbReference>
<dbReference type="SMR" id="B0CC57"/>
<dbReference type="STRING" id="329726.AM1_0549"/>
<dbReference type="KEGG" id="amr:AM1_0549"/>
<dbReference type="eggNOG" id="COG0001">
    <property type="taxonomic scope" value="Bacteria"/>
</dbReference>
<dbReference type="HOGENOM" id="CLU_016922_1_5_3"/>
<dbReference type="OrthoDB" id="9807885at2"/>
<dbReference type="UniPathway" id="UPA00251">
    <property type="reaction ID" value="UER00317"/>
</dbReference>
<dbReference type="UniPathway" id="UPA00668"/>
<dbReference type="Proteomes" id="UP000000268">
    <property type="component" value="Chromosome"/>
</dbReference>
<dbReference type="GO" id="GO:0005737">
    <property type="term" value="C:cytoplasm"/>
    <property type="evidence" value="ECO:0007669"/>
    <property type="project" value="UniProtKB-SubCell"/>
</dbReference>
<dbReference type="GO" id="GO:0042286">
    <property type="term" value="F:glutamate-1-semialdehyde 2,1-aminomutase activity"/>
    <property type="evidence" value="ECO:0007669"/>
    <property type="project" value="UniProtKB-UniRule"/>
</dbReference>
<dbReference type="GO" id="GO:0030170">
    <property type="term" value="F:pyridoxal phosphate binding"/>
    <property type="evidence" value="ECO:0007669"/>
    <property type="project" value="InterPro"/>
</dbReference>
<dbReference type="GO" id="GO:0008483">
    <property type="term" value="F:transaminase activity"/>
    <property type="evidence" value="ECO:0007669"/>
    <property type="project" value="InterPro"/>
</dbReference>
<dbReference type="GO" id="GO:0015995">
    <property type="term" value="P:chlorophyll biosynthetic process"/>
    <property type="evidence" value="ECO:0007669"/>
    <property type="project" value="UniProtKB-UniRule"/>
</dbReference>
<dbReference type="GO" id="GO:0006782">
    <property type="term" value="P:protoporphyrinogen IX biosynthetic process"/>
    <property type="evidence" value="ECO:0007669"/>
    <property type="project" value="UniProtKB-UniRule"/>
</dbReference>
<dbReference type="CDD" id="cd00610">
    <property type="entry name" value="OAT_like"/>
    <property type="match status" value="1"/>
</dbReference>
<dbReference type="FunFam" id="3.40.640.10:FF:000021">
    <property type="entry name" value="Glutamate-1-semialdehyde 2,1-aminomutase"/>
    <property type="match status" value="1"/>
</dbReference>
<dbReference type="Gene3D" id="3.90.1150.10">
    <property type="entry name" value="Aspartate Aminotransferase, domain 1"/>
    <property type="match status" value="1"/>
</dbReference>
<dbReference type="Gene3D" id="3.40.640.10">
    <property type="entry name" value="Type I PLP-dependent aspartate aminotransferase-like (Major domain)"/>
    <property type="match status" value="1"/>
</dbReference>
<dbReference type="HAMAP" id="MF_00375">
    <property type="entry name" value="HemL_aminotrans_3"/>
    <property type="match status" value="1"/>
</dbReference>
<dbReference type="InterPro" id="IPR004639">
    <property type="entry name" value="4pyrrol_synth_GluAld_NH2Trfase"/>
</dbReference>
<dbReference type="InterPro" id="IPR005814">
    <property type="entry name" value="Aminotrans_3"/>
</dbReference>
<dbReference type="InterPro" id="IPR049704">
    <property type="entry name" value="Aminotrans_3_PPA_site"/>
</dbReference>
<dbReference type="InterPro" id="IPR015424">
    <property type="entry name" value="PyrdxlP-dep_Trfase"/>
</dbReference>
<dbReference type="InterPro" id="IPR015421">
    <property type="entry name" value="PyrdxlP-dep_Trfase_major"/>
</dbReference>
<dbReference type="InterPro" id="IPR015422">
    <property type="entry name" value="PyrdxlP-dep_Trfase_small"/>
</dbReference>
<dbReference type="NCBIfam" id="TIGR00713">
    <property type="entry name" value="hemL"/>
    <property type="match status" value="1"/>
</dbReference>
<dbReference type="NCBIfam" id="NF000818">
    <property type="entry name" value="PRK00062.1"/>
    <property type="match status" value="1"/>
</dbReference>
<dbReference type="PANTHER" id="PTHR43713">
    <property type="entry name" value="GLUTAMATE-1-SEMIALDEHYDE 2,1-AMINOMUTASE"/>
    <property type="match status" value="1"/>
</dbReference>
<dbReference type="PANTHER" id="PTHR43713:SF3">
    <property type="entry name" value="GLUTAMATE-1-SEMIALDEHYDE 2,1-AMINOMUTASE 1, CHLOROPLASTIC-RELATED"/>
    <property type="match status" value="1"/>
</dbReference>
<dbReference type="Pfam" id="PF00202">
    <property type="entry name" value="Aminotran_3"/>
    <property type="match status" value="1"/>
</dbReference>
<dbReference type="SUPFAM" id="SSF53383">
    <property type="entry name" value="PLP-dependent transferases"/>
    <property type="match status" value="1"/>
</dbReference>
<dbReference type="PROSITE" id="PS00600">
    <property type="entry name" value="AA_TRANSFER_CLASS_3"/>
    <property type="match status" value="1"/>
</dbReference>
<keyword id="KW-0149">Chlorophyll biosynthesis</keyword>
<keyword id="KW-0963">Cytoplasm</keyword>
<keyword id="KW-0413">Isomerase</keyword>
<keyword id="KW-0627">Porphyrin biosynthesis</keyword>
<keyword id="KW-0663">Pyridoxal phosphate</keyword>
<keyword id="KW-1185">Reference proteome</keyword>
<reference key="1">
    <citation type="journal article" date="2008" name="Proc. Natl. Acad. Sci. U.S.A.">
        <title>Niche adaptation and genome expansion in the chlorophyll d-producing cyanobacterium Acaryochloris marina.</title>
        <authorList>
            <person name="Swingley W.D."/>
            <person name="Chen M."/>
            <person name="Cheung P.C."/>
            <person name="Conrad A.L."/>
            <person name="Dejesa L.C."/>
            <person name="Hao J."/>
            <person name="Honchak B.M."/>
            <person name="Karbach L.E."/>
            <person name="Kurdoglu A."/>
            <person name="Lahiri S."/>
            <person name="Mastrian S.D."/>
            <person name="Miyashita H."/>
            <person name="Page L."/>
            <person name="Ramakrishna P."/>
            <person name="Satoh S."/>
            <person name="Sattley W.M."/>
            <person name="Shimada Y."/>
            <person name="Taylor H.L."/>
            <person name="Tomo T."/>
            <person name="Tsuchiya T."/>
            <person name="Wang Z.T."/>
            <person name="Raymond J."/>
            <person name="Mimuro M."/>
            <person name="Blankenship R.E."/>
            <person name="Touchman J.W."/>
        </authorList>
    </citation>
    <scope>NUCLEOTIDE SEQUENCE [LARGE SCALE GENOMIC DNA]</scope>
    <source>
        <strain>MBIC 11017</strain>
    </source>
</reference>
<protein>
    <recommendedName>
        <fullName evidence="1">Glutamate-1-semialdehyde 2,1-aminomutase</fullName>
        <shortName evidence="1">GSA</shortName>
        <ecNumber evidence="1">5.4.3.8</ecNumber>
    </recommendedName>
    <alternativeName>
        <fullName evidence="1">Glutamate-1-semialdehyde aminotransferase</fullName>
        <shortName evidence="1">GSA-AT</shortName>
    </alternativeName>
</protein>